<dbReference type="EC" id="6.1.1.1" evidence="1"/>
<dbReference type="EMBL" id="AE014133">
    <property type="protein sequence ID" value="AAN59596.1"/>
    <property type="status" value="ALT_INIT"/>
    <property type="molecule type" value="Genomic_DNA"/>
</dbReference>
<dbReference type="RefSeq" id="NP_722290.1">
    <property type="nucleotide sequence ID" value="NC_004350.2"/>
</dbReference>
<dbReference type="RefSeq" id="WP_002263430.1">
    <property type="nucleotide sequence ID" value="NC_004350.2"/>
</dbReference>
<dbReference type="SMR" id="Q8DS44"/>
<dbReference type="STRING" id="210007.SMU_1992"/>
<dbReference type="KEGG" id="smu:SMU_1992"/>
<dbReference type="PATRIC" id="fig|210007.7.peg.1773"/>
<dbReference type="eggNOG" id="COG0162">
    <property type="taxonomic scope" value="Bacteria"/>
</dbReference>
<dbReference type="HOGENOM" id="CLU_024003_0_3_9"/>
<dbReference type="OrthoDB" id="9804243at2"/>
<dbReference type="Proteomes" id="UP000002512">
    <property type="component" value="Chromosome"/>
</dbReference>
<dbReference type="GO" id="GO:0005829">
    <property type="term" value="C:cytosol"/>
    <property type="evidence" value="ECO:0007669"/>
    <property type="project" value="TreeGrafter"/>
</dbReference>
<dbReference type="GO" id="GO:0005524">
    <property type="term" value="F:ATP binding"/>
    <property type="evidence" value="ECO:0007669"/>
    <property type="project" value="UniProtKB-UniRule"/>
</dbReference>
<dbReference type="GO" id="GO:0003723">
    <property type="term" value="F:RNA binding"/>
    <property type="evidence" value="ECO:0007669"/>
    <property type="project" value="UniProtKB-KW"/>
</dbReference>
<dbReference type="GO" id="GO:0004831">
    <property type="term" value="F:tyrosine-tRNA ligase activity"/>
    <property type="evidence" value="ECO:0007669"/>
    <property type="project" value="UniProtKB-UniRule"/>
</dbReference>
<dbReference type="GO" id="GO:0006437">
    <property type="term" value="P:tyrosyl-tRNA aminoacylation"/>
    <property type="evidence" value="ECO:0007669"/>
    <property type="project" value="UniProtKB-UniRule"/>
</dbReference>
<dbReference type="CDD" id="cd00165">
    <property type="entry name" value="S4"/>
    <property type="match status" value="1"/>
</dbReference>
<dbReference type="CDD" id="cd00805">
    <property type="entry name" value="TyrRS_core"/>
    <property type="match status" value="1"/>
</dbReference>
<dbReference type="FunFam" id="1.10.240.10:FF:000001">
    <property type="entry name" value="Tyrosine--tRNA ligase"/>
    <property type="match status" value="1"/>
</dbReference>
<dbReference type="FunFam" id="3.40.50.620:FF:000008">
    <property type="entry name" value="Tyrosine--tRNA ligase"/>
    <property type="match status" value="1"/>
</dbReference>
<dbReference type="Gene3D" id="3.40.50.620">
    <property type="entry name" value="HUPs"/>
    <property type="match status" value="1"/>
</dbReference>
<dbReference type="Gene3D" id="3.10.290.10">
    <property type="entry name" value="RNA-binding S4 domain"/>
    <property type="match status" value="1"/>
</dbReference>
<dbReference type="Gene3D" id="1.10.240.10">
    <property type="entry name" value="Tyrosyl-Transfer RNA Synthetase"/>
    <property type="match status" value="1"/>
</dbReference>
<dbReference type="HAMAP" id="MF_02006">
    <property type="entry name" value="Tyr_tRNA_synth_type1"/>
    <property type="match status" value="1"/>
</dbReference>
<dbReference type="InterPro" id="IPR001412">
    <property type="entry name" value="aa-tRNA-synth_I_CS"/>
</dbReference>
<dbReference type="InterPro" id="IPR002305">
    <property type="entry name" value="aa-tRNA-synth_Ic"/>
</dbReference>
<dbReference type="InterPro" id="IPR014729">
    <property type="entry name" value="Rossmann-like_a/b/a_fold"/>
</dbReference>
<dbReference type="InterPro" id="IPR002942">
    <property type="entry name" value="S4_RNA-bd"/>
</dbReference>
<dbReference type="InterPro" id="IPR036986">
    <property type="entry name" value="S4_RNA-bd_sf"/>
</dbReference>
<dbReference type="InterPro" id="IPR054608">
    <property type="entry name" value="SYY-like_C"/>
</dbReference>
<dbReference type="InterPro" id="IPR002307">
    <property type="entry name" value="Tyr-tRNA-ligase"/>
</dbReference>
<dbReference type="InterPro" id="IPR024088">
    <property type="entry name" value="Tyr-tRNA-ligase_bac-type"/>
</dbReference>
<dbReference type="InterPro" id="IPR024107">
    <property type="entry name" value="Tyr-tRNA-ligase_bac_1"/>
</dbReference>
<dbReference type="NCBIfam" id="TIGR00234">
    <property type="entry name" value="tyrS"/>
    <property type="match status" value="1"/>
</dbReference>
<dbReference type="PANTHER" id="PTHR11766:SF0">
    <property type="entry name" value="TYROSINE--TRNA LIGASE, MITOCHONDRIAL"/>
    <property type="match status" value="1"/>
</dbReference>
<dbReference type="PANTHER" id="PTHR11766">
    <property type="entry name" value="TYROSYL-TRNA SYNTHETASE"/>
    <property type="match status" value="1"/>
</dbReference>
<dbReference type="Pfam" id="PF22421">
    <property type="entry name" value="SYY_C-terminal"/>
    <property type="match status" value="1"/>
</dbReference>
<dbReference type="Pfam" id="PF00579">
    <property type="entry name" value="tRNA-synt_1b"/>
    <property type="match status" value="1"/>
</dbReference>
<dbReference type="PRINTS" id="PR01040">
    <property type="entry name" value="TRNASYNTHTYR"/>
</dbReference>
<dbReference type="SMART" id="SM00363">
    <property type="entry name" value="S4"/>
    <property type="match status" value="1"/>
</dbReference>
<dbReference type="SUPFAM" id="SSF55174">
    <property type="entry name" value="Alpha-L RNA-binding motif"/>
    <property type="match status" value="1"/>
</dbReference>
<dbReference type="SUPFAM" id="SSF52374">
    <property type="entry name" value="Nucleotidylyl transferase"/>
    <property type="match status" value="1"/>
</dbReference>
<dbReference type="PROSITE" id="PS00178">
    <property type="entry name" value="AA_TRNA_LIGASE_I"/>
    <property type="match status" value="1"/>
</dbReference>
<dbReference type="PROSITE" id="PS50889">
    <property type="entry name" value="S4"/>
    <property type="match status" value="1"/>
</dbReference>
<organism>
    <name type="scientific">Streptococcus mutans serotype c (strain ATCC 700610 / UA159)</name>
    <dbReference type="NCBI Taxonomy" id="210007"/>
    <lineage>
        <taxon>Bacteria</taxon>
        <taxon>Bacillati</taxon>
        <taxon>Bacillota</taxon>
        <taxon>Bacilli</taxon>
        <taxon>Lactobacillales</taxon>
        <taxon>Streptococcaceae</taxon>
        <taxon>Streptococcus</taxon>
    </lineage>
</organism>
<evidence type="ECO:0000255" key="1">
    <source>
        <dbReference type="HAMAP-Rule" id="MF_02006"/>
    </source>
</evidence>
<evidence type="ECO:0000305" key="2"/>
<comment type="function">
    <text evidence="1">Catalyzes the attachment of tyrosine to tRNA(Tyr) in a two-step reaction: tyrosine is first activated by ATP to form Tyr-AMP and then transferred to the acceptor end of tRNA(Tyr).</text>
</comment>
<comment type="catalytic activity">
    <reaction evidence="1">
        <text>tRNA(Tyr) + L-tyrosine + ATP = L-tyrosyl-tRNA(Tyr) + AMP + diphosphate + H(+)</text>
        <dbReference type="Rhea" id="RHEA:10220"/>
        <dbReference type="Rhea" id="RHEA-COMP:9706"/>
        <dbReference type="Rhea" id="RHEA-COMP:9707"/>
        <dbReference type="ChEBI" id="CHEBI:15378"/>
        <dbReference type="ChEBI" id="CHEBI:30616"/>
        <dbReference type="ChEBI" id="CHEBI:33019"/>
        <dbReference type="ChEBI" id="CHEBI:58315"/>
        <dbReference type="ChEBI" id="CHEBI:78442"/>
        <dbReference type="ChEBI" id="CHEBI:78536"/>
        <dbReference type="ChEBI" id="CHEBI:456215"/>
        <dbReference type="EC" id="6.1.1.1"/>
    </reaction>
</comment>
<comment type="subunit">
    <text evidence="1">Homodimer.</text>
</comment>
<comment type="subcellular location">
    <subcellularLocation>
        <location evidence="1">Cytoplasm</location>
    </subcellularLocation>
</comment>
<comment type="similarity">
    <text evidence="1">Belongs to the class-I aminoacyl-tRNA synthetase family. TyrS type 1 subfamily.</text>
</comment>
<comment type="sequence caution" evidence="2">
    <conflict type="erroneous initiation">
        <sequence resource="EMBL-CDS" id="AAN59596"/>
    </conflict>
</comment>
<accession>Q8DS44</accession>
<reference key="1">
    <citation type="journal article" date="2002" name="Proc. Natl. Acad. Sci. U.S.A.">
        <title>Genome sequence of Streptococcus mutans UA159, a cariogenic dental pathogen.</title>
        <authorList>
            <person name="Ajdic D.J."/>
            <person name="McShan W.M."/>
            <person name="McLaughlin R.E."/>
            <person name="Savic G."/>
            <person name="Chang J."/>
            <person name="Carson M.B."/>
            <person name="Primeaux C."/>
            <person name="Tian R."/>
            <person name="Kenton S."/>
            <person name="Jia H.G."/>
            <person name="Lin S.P."/>
            <person name="Qian Y."/>
            <person name="Li S."/>
            <person name="Zhu H."/>
            <person name="Najar F.Z."/>
            <person name="Lai H."/>
            <person name="White J."/>
            <person name="Roe B.A."/>
            <person name="Ferretti J.J."/>
        </authorList>
    </citation>
    <scope>NUCLEOTIDE SEQUENCE [LARGE SCALE GENOMIC DNA]</scope>
    <source>
        <strain>ATCC 700610 / UA159</strain>
    </source>
</reference>
<protein>
    <recommendedName>
        <fullName evidence="1">Tyrosine--tRNA ligase</fullName>
        <ecNumber evidence="1">6.1.1.1</ecNumber>
    </recommendedName>
    <alternativeName>
        <fullName evidence="1">Tyrosyl-tRNA synthetase</fullName>
        <shortName evidence="1">TyrRS</shortName>
    </alternativeName>
</protein>
<sequence length="418" mass="47581">MTIFEELKARGLVFQTTDEEALKKSLDDGQVSFYTGYDPTADSLHLGHLVPILVMRHLQLAGHKPYALVGGATGLIGDPSFKDDERSLQTKETVKNWVQSIRSQLERFIDFKHGDNKAQMVNNYDWMGKITFIDFLRDVGKYFTVNYMMSKESVKKRIETGISYTEFAYQIMQGYDFYVLNQEHAVTLQVGGSDQWGNMTAGTELIRRKANKTAHVITVPLITDATGKKFGKSEGNAVWLDADKTSPYEMYQFWLNVMDADAIRFLKIFTFLSLDEIEDIRVKFEAAPHERLAQKILAKEVVTFVHGQTAYQEAVKITEQLFAGHIKSLSAKELKQGLSNVPNYAVKSNDNHNIVELLVTAGIVNSKRQAREDLQNGAIYINGERIQDLTYNLSQQDKIDNELTVIRRGKKKYFVLTY</sequence>
<keyword id="KW-0030">Aminoacyl-tRNA synthetase</keyword>
<keyword id="KW-0067">ATP-binding</keyword>
<keyword id="KW-0963">Cytoplasm</keyword>
<keyword id="KW-0436">Ligase</keyword>
<keyword id="KW-0547">Nucleotide-binding</keyword>
<keyword id="KW-0648">Protein biosynthesis</keyword>
<keyword id="KW-1185">Reference proteome</keyword>
<keyword id="KW-0694">RNA-binding</keyword>
<feature type="chain" id="PRO_0000234787" description="Tyrosine--tRNA ligase">
    <location>
        <begin position="1"/>
        <end position="418"/>
    </location>
</feature>
<feature type="domain" description="S4 RNA-binding" evidence="1">
    <location>
        <begin position="352"/>
        <end position="418"/>
    </location>
</feature>
<feature type="short sequence motif" description="'HIGH' region">
    <location>
        <begin position="39"/>
        <end position="48"/>
    </location>
</feature>
<feature type="short sequence motif" description="'KMSKS' region">
    <location>
        <begin position="229"/>
        <end position="233"/>
    </location>
</feature>
<feature type="binding site" evidence="1">
    <location>
        <position position="34"/>
    </location>
    <ligand>
        <name>L-tyrosine</name>
        <dbReference type="ChEBI" id="CHEBI:58315"/>
    </ligand>
</feature>
<feature type="binding site" evidence="1">
    <location>
        <position position="169"/>
    </location>
    <ligand>
        <name>L-tyrosine</name>
        <dbReference type="ChEBI" id="CHEBI:58315"/>
    </ligand>
</feature>
<feature type="binding site" evidence="1">
    <location>
        <position position="173"/>
    </location>
    <ligand>
        <name>L-tyrosine</name>
        <dbReference type="ChEBI" id="CHEBI:58315"/>
    </ligand>
</feature>
<feature type="binding site" evidence="1">
    <location>
        <position position="232"/>
    </location>
    <ligand>
        <name>ATP</name>
        <dbReference type="ChEBI" id="CHEBI:30616"/>
    </ligand>
</feature>
<proteinExistence type="inferred from homology"/>
<name>SYY_STRMU</name>
<gene>
    <name evidence="1" type="primary">tyrS</name>
    <name type="ordered locus">SMU_1992</name>
</gene>